<protein>
    <recommendedName>
        <fullName>Bifunctional NAD(P)H-hydrate repair enzyme Nnr</fullName>
    </recommendedName>
    <alternativeName>
        <fullName>Nicotinamide nucleotide repair protein</fullName>
    </alternativeName>
    <domain>
        <recommendedName>
            <fullName>ADP-dependent (S)-NAD(P)H-hydrate dehydratase</fullName>
            <ecNumber>4.2.1.136</ecNumber>
        </recommendedName>
        <alternativeName>
            <fullName>ADP-dependent NAD(P)HX dehydratase</fullName>
        </alternativeName>
    </domain>
    <domain>
        <recommendedName>
            <fullName>NAD(P)H-hydrate epimerase</fullName>
            <ecNumber>5.1.99.6</ecNumber>
        </recommendedName>
        <alternativeName>
            <fullName>NAD(P)HX epimerase</fullName>
        </alternativeName>
    </domain>
</protein>
<name>NNR_GLOVI</name>
<sequence length="508" mass="52119">MSGLCACTLVGAAQVQQLEAALFAAGMPVEALMEKAGLRLAAAIAADYPAGGYPRVGVLVGPGHNGGDALVVARELWLVGRSVQVFCPRPPIKPLARAHLDYFQSLGGRVHTGAVPEEPGVDLWVDGLFGFGLERPVAEPYAGLMAQVNASGVPVAAVDLPSGLSSETGEALGGLAVRAARTYCLGLWKRGLWQDAALDWLGVPVRLEIGFSEAQVRSVLGEDHRSARLLLPDAARAGLPLARPATAHKYSVGTLLAVAGSRQYGGAATLVALGARSGGPGMLYLALPESLADRVAARLPEAIVHPCPQAENGALADLPGVDLEKFDAVVCGPGLGKAEQALVLRLAREAAGALVLDADGLNLIAGQLEVLAQRAAPTVLTPHPGEFKRLFPDIALADRQGAARTAALRSHAWIVLKGARTVVASPSGQVWVNPGGSPALARGGSGDVLAGLLGALLAQCENPEPAVLGAVWWHAAAGEWLAARHTVLGVDAETLALGLLPFLAADGP</sequence>
<dbReference type="EC" id="4.2.1.136"/>
<dbReference type="EC" id="5.1.99.6"/>
<dbReference type="EMBL" id="BA000045">
    <property type="protein sequence ID" value="BAC90178.1"/>
    <property type="molecule type" value="Genomic_DNA"/>
</dbReference>
<dbReference type="RefSeq" id="NP_925183.1">
    <property type="nucleotide sequence ID" value="NC_005125.1"/>
</dbReference>
<dbReference type="RefSeq" id="WP_011142234.1">
    <property type="nucleotide sequence ID" value="NC_005125.1"/>
</dbReference>
<dbReference type="SMR" id="Q7NIE6"/>
<dbReference type="FunCoup" id="Q7NIE6">
    <property type="interactions" value="75"/>
</dbReference>
<dbReference type="STRING" id="251221.gene:10759732"/>
<dbReference type="EnsemblBacteria" id="BAC90178">
    <property type="protein sequence ID" value="BAC90178"/>
    <property type="gene ID" value="BAC90178"/>
</dbReference>
<dbReference type="KEGG" id="gvi:glr2237"/>
<dbReference type="PATRIC" id="fig|251221.4.peg.2270"/>
<dbReference type="eggNOG" id="COG0062">
    <property type="taxonomic scope" value="Bacteria"/>
</dbReference>
<dbReference type="eggNOG" id="COG0063">
    <property type="taxonomic scope" value="Bacteria"/>
</dbReference>
<dbReference type="HOGENOM" id="CLU_024853_4_1_3"/>
<dbReference type="InParanoid" id="Q7NIE6"/>
<dbReference type="OrthoDB" id="9806925at2"/>
<dbReference type="PhylomeDB" id="Q7NIE6"/>
<dbReference type="Proteomes" id="UP000000557">
    <property type="component" value="Chromosome"/>
</dbReference>
<dbReference type="GO" id="GO:0052855">
    <property type="term" value="F:ADP-dependent NAD(P)H-hydrate dehydratase activity"/>
    <property type="evidence" value="ECO:0000318"/>
    <property type="project" value="GO_Central"/>
</dbReference>
<dbReference type="GO" id="GO:0005524">
    <property type="term" value="F:ATP binding"/>
    <property type="evidence" value="ECO:0007669"/>
    <property type="project" value="UniProtKB-KW"/>
</dbReference>
<dbReference type="GO" id="GO:0046872">
    <property type="term" value="F:metal ion binding"/>
    <property type="evidence" value="ECO:0007669"/>
    <property type="project" value="UniProtKB-KW"/>
</dbReference>
<dbReference type="GO" id="GO:0052856">
    <property type="term" value="F:NAD(P)HX epimerase activity"/>
    <property type="evidence" value="ECO:0000318"/>
    <property type="project" value="GO_Central"/>
</dbReference>
<dbReference type="GO" id="GO:0110051">
    <property type="term" value="P:metabolite repair"/>
    <property type="evidence" value="ECO:0000318"/>
    <property type="project" value="GO_Central"/>
</dbReference>
<dbReference type="GO" id="GO:0046496">
    <property type="term" value="P:nicotinamide nucleotide metabolic process"/>
    <property type="evidence" value="ECO:0007669"/>
    <property type="project" value="UniProtKB-UniRule"/>
</dbReference>
<dbReference type="CDD" id="cd01171">
    <property type="entry name" value="YXKO-related"/>
    <property type="match status" value="1"/>
</dbReference>
<dbReference type="FunFam" id="3.40.1190.20:FF:000134">
    <property type="entry name" value="Bifunctional NAD(P)H-hydrate repair enzyme Nnr"/>
    <property type="match status" value="1"/>
</dbReference>
<dbReference type="FunFam" id="3.40.50.10260:FF:000015">
    <property type="entry name" value="Multifunctional fusion protein"/>
    <property type="match status" value="1"/>
</dbReference>
<dbReference type="Gene3D" id="3.40.1190.20">
    <property type="match status" value="1"/>
</dbReference>
<dbReference type="Gene3D" id="3.40.50.10260">
    <property type="entry name" value="YjeF N-terminal domain"/>
    <property type="match status" value="1"/>
</dbReference>
<dbReference type="HAMAP" id="MF_01965">
    <property type="entry name" value="NADHX_dehydratase"/>
    <property type="match status" value="1"/>
</dbReference>
<dbReference type="HAMAP" id="MF_01966">
    <property type="entry name" value="NADHX_epimerase"/>
    <property type="match status" value="1"/>
</dbReference>
<dbReference type="InterPro" id="IPR017953">
    <property type="entry name" value="Carbohydrate_kinase_pred_CS"/>
</dbReference>
<dbReference type="InterPro" id="IPR000631">
    <property type="entry name" value="CARKD"/>
</dbReference>
<dbReference type="InterPro" id="IPR030677">
    <property type="entry name" value="Nnr"/>
</dbReference>
<dbReference type="InterPro" id="IPR029056">
    <property type="entry name" value="Ribokinase-like"/>
</dbReference>
<dbReference type="InterPro" id="IPR004443">
    <property type="entry name" value="YjeF_N_dom"/>
</dbReference>
<dbReference type="InterPro" id="IPR036652">
    <property type="entry name" value="YjeF_N_dom_sf"/>
</dbReference>
<dbReference type="NCBIfam" id="TIGR00196">
    <property type="entry name" value="yjeF_cterm"/>
    <property type="match status" value="1"/>
</dbReference>
<dbReference type="NCBIfam" id="TIGR00197">
    <property type="entry name" value="yjeF_nterm"/>
    <property type="match status" value="1"/>
</dbReference>
<dbReference type="PANTHER" id="PTHR12592:SF0">
    <property type="entry name" value="ATP-DEPENDENT (S)-NAD(P)H-HYDRATE DEHYDRATASE"/>
    <property type="match status" value="1"/>
</dbReference>
<dbReference type="PANTHER" id="PTHR12592">
    <property type="entry name" value="ATP-DEPENDENT (S)-NAD(P)H-HYDRATE DEHYDRATASE FAMILY MEMBER"/>
    <property type="match status" value="1"/>
</dbReference>
<dbReference type="Pfam" id="PF01256">
    <property type="entry name" value="Carb_kinase"/>
    <property type="match status" value="1"/>
</dbReference>
<dbReference type="Pfam" id="PF03853">
    <property type="entry name" value="YjeF_N"/>
    <property type="match status" value="1"/>
</dbReference>
<dbReference type="PIRSF" id="PIRSF017184">
    <property type="entry name" value="Nnr"/>
    <property type="match status" value="1"/>
</dbReference>
<dbReference type="SUPFAM" id="SSF53613">
    <property type="entry name" value="Ribokinase-like"/>
    <property type="match status" value="1"/>
</dbReference>
<dbReference type="SUPFAM" id="SSF64153">
    <property type="entry name" value="YjeF N-terminal domain-like"/>
    <property type="match status" value="1"/>
</dbReference>
<dbReference type="PROSITE" id="PS01050">
    <property type="entry name" value="YJEF_C_2"/>
    <property type="match status" value="1"/>
</dbReference>
<dbReference type="PROSITE" id="PS51383">
    <property type="entry name" value="YJEF_C_3"/>
    <property type="match status" value="1"/>
</dbReference>
<dbReference type="PROSITE" id="PS51385">
    <property type="entry name" value="YJEF_N"/>
    <property type="match status" value="1"/>
</dbReference>
<accession>Q7NIE6</accession>
<reference key="1">
    <citation type="journal article" date="2003" name="DNA Res.">
        <title>Complete genome structure of Gloeobacter violaceus PCC 7421, a cyanobacterium that lacks thylakoids.</title>
        <authorList>
            <person name="Nakamura Y."/>
            <person name="Kaneko T."/>
            <person name="Sato S."/>
            <person name="Mimuro M."/>
            <person name="Miyashita H."/>
            <person name="Tsuchiya T."/>
            <person name="Sasamoto S."/>
            <person name="Watanabe A."/>
            <person name="Kawashima K."/>
            <person name="Kishida Y."/>
            <person name="Kiyokawa C."/>
            <person name="Kohara M."/>
            <person name="Matsumoto M."/>
            <person name="Matsuno A."/>
            <person name="Nakazaki N."/>
            <person name="Shimpo S."/>
            <person name="Takeuchi C."/>
            <person name="Yamada M."/>
            <person name="Tabata S."/>
        </authorList>
    </citation>
    <scope>NUCLEOTIDE SEQUENCE [LARGE SCALE GENOMIC DNA]</scope>
    <source>
        <strain>ATCC 29082 / PCC 7421</strain>
    </source>
</reference>
<organism>
    <name type="scientific">Gloeobacter violaceus (strain ATCC 29082 / PCC 7421)</name>
    <dbReference type="NCBI Taxonomy" id="251221"/>
    <lineage>
        <taxon>Bacteria</taxon>
        <taxon>Bacillati</taxon>
        <taxon>Cyanobacteriota</taxon>
        <taxon>Cyanophyceae</taxon>
        <taxon>Gloeobacterales</taxon>
        <taxon>Gloeobacteraceae</taxon>
        <taxon>Gloeobacter</taxon>
    </lineage>
</organism>
<comment type="function">
    <text evidence="1">Bifunctional enzyme that catalyzes the epimerization of the S- and R-forms of NAD(P)HX and the dehydration of the S-form of NAD(P)HX at the expense of ADP, which is converted to AMP. This allows the repair of both epimers of NAD(P)HX, a damaged form of NAD(P)H that is a result of enzymatic or heat-dependent hydration (By similarity).</text>
</comment>
<comment type="catalytic activity">
    <reaction>
        <text>(6S)-NADHX + ADP = AMP + phosphate + NADH + H(+)</text>
        <dbReference type="Rhea" id="RHEA:32223"/>
        <dbReference type="ChEBI" id="CHEBI:15378"/>
        <dbReference type="ChEBI" id="CHEBI:43474"/>
        <dbReference type="ChEBI" id="CHEBI:57945"/>
        <dbReference type="ChEBI" id="CHEBI:64074"/>
        <dbReference type="ChEBI" id="CHEBI:456215"/>
        <dbReference type="ChEBI" id="CHEBI:456216"/>
        <dbReference type="EC" id="4.2.1.136"/>
    </reaction>
</comment>
<comment type="catalytic activity">
    <reaction>
        <text>(6S)-NADPHX + ADP = AMP + phosphate + NADPH + H(+)</text>
        <dbReference type="Rhea" id="RHEA:32235"/>
        <dbReference type="ChEBI" id="CHEBI:15378"/>
        <dbReference type="ChEBI" id="CHEBI:43474"/>
        <dbReference type="ChEBI" id="CHEBI:57783"/>
        <dbReference type="ChEBI" id="CHEBI:64076"/>
        <dbReference type="ChEBI" id="CHEBI:456215"/>
        <dbReference type="ChEBI" id="CHEBI:456216"/>
        <dbReference type="EC" id="4.2.1.136"/>
    </reaction>
</comment>
<comment type="catalytic activity">
    <reaction>
        <text>(6R)-NADHX = (6S)-NADHX</text>
        <dbReference type="Rhea" id="RHEA:32215"/>
        <dbReference type="ChEBI" id="CHEBI:64074"/>
        <dbReference type="ChEBI" id="CHEBI:64075"/>
        <dbReference type="EC" id="5.1.99.6"/>
    </reaction>
</comment>
<comment type="catalytic activity">
    <reaction>
        <text>(6R)-NADPHX = (6S)-NADPHX</text>
        <dbReference type="Rhea" id="RHEA:32227"/>
        <dbReference type="ChEBI" id="CHEBI:64076"/>
        <dbReference type="ChEBI" id="CHEBI:64077"/>
        <dbReference type="EC" id="5.1.99.6"/>
    </reaction>
</comment>
<comment type="cofactor">
    <cofactor evidence="1">
        <name>K(+)</name>
        <dbReference type="ChEBI" id="CHEBI:29103"/>
    </cofactor>
    <text evidence="1">Binds 1 potassium ion per subunit.</text>
</comment>
<comment type="similarity">
    <text evidence="2">In the N-terminal section; belongs to the NnrE/AIBP family.</text>
</comment>
<comment type="similarity">
    <text evidence="2">In the C-terminal section; belongs to the NnrD/CARKD family.</text>
</comment>
<evidence type="ECO:0000250" key="1"/>
<evidence type="ECO:0000305" key="2"/>
<feature type="chain" id="PRO_0000416418" description="Bifunctional NAD(P)H-hydrate repair enzyme Nnr">
    <location>
        <begin position="1"/>
        <end position="508"/>
    </location>
</feature>
<feature type="domain" description="YjeF N-terminal">
    <location>
        <begin position="15"/>
        <end position="217"/>
    </location>
</feature>
<feature type="domain" description="YjeF C-terminal">
    <location>
        <begin position="232"/>
        <end position="506"/>
    </location>
</feature>
<feature type="region of interest" description="NAD(P)H-hydrate epimerase" evidence="1">
    <location>
        <begin position="1"/>
        <end position="224"/>
    </location>
</feature>
<feature type="region of interest" description="NADPHX 1; for epimerase activity" evidence="1">
    <location>
        <begin position="64"/>
        <end position="68"/>
    </location>
</feature>
<feature type="region of interest" description="NADPHX 1; for epimerase activity" evidence="1">
    <location>
        <begin position="130"/>
        <end position="136"/>
    </location>
</feature>
<feature type="region of interest" description="ADP-dependent (S)-NAD(P)H-hydrate dehydratase" evidence="1">
    <location>
        <begin position="232"/>
        <end position="508"/>
    </location>
</feature>
<feature type="region of interest" description="NADPHX 2; for dehydratase activity" evidence="1">
    <location>
        <begin position="383"/>
        <end position="389"/>
    </location>
</feature>
<feature type="binding site" evidence="1">
    <location>
        <position position="65"/>
    </location>
    <ligand>
        <name>K(+)</name>
        <dbReference type="ChEBI" id="CHEBI:29103"/>
    </ligand>
</feature>
<feature type="binding site" evidence="1">
    <location>
        <position position="126"/>
    </location>
    <ligand>
        <name>K(+)</name>
        <dbReference type="ChEBI" id="CHEBI:29103"/>
    </ligand>
</feature>
<feature type="binding site" evidence="1">
    <location>
        <position position="141"/>
    </location>
    <ligand>
        <name>(6S)-NADPHX</name>
        <dbReference type="ChEBI" id="CHEBI:64076"/>
        <label>1</label>
        <note>for epimerase activity</note>
    </ligand>
</feature>
<feature type="binding site" evidence="1">
    <location>
        <position position="159"/>
    </location>
    <ligand>
        <name>(6S)-NADPHX</name>
        <dbReference type="ChEBI" id="CHEBI:64076"/>
        <label>1</label>
        <note>for epimerase activity</note>
    </ligand>
</feature>
<feature type="binding site" evidence="1">
    <location>
        <position position="162"/>
    </location>
    <ligand>
        <name>K(+)</name>
        <dbReference type="ChEBI" id="CHEBI:29103"/>
    </ligand>
</feature>
<feature type="binding site" evidence="1">
    <location>
        <position position="334"/>
    </location>
    <ligand>
        <name>(6S)-NADPHX</name>
        <dbReference type="ChEBI" id="CHEBI:64076"/>
        <label>2</label>
        <note>for dehydratase activity</note>
    </ligand>
</feature>
<feature type="binding site" evidence="1">
    <location>
        <begin position="417"/>
        <end position="421"/>
    </location>
    <ligand>
        <name>ADP</name>
        <dbReference type="ChEBI" id="CHEBI:456216"/>
    </ligand>
</feature>
<feature type="binding site" evidence="1">
    <location>
        <begin position="437"/>
        <end position="446"/>
    </location>
    <ligand>
        <name>ADP</name>
        <dbReference type="ChEBI" id="CHEBI:456216"/>
    </ligand>
</feature>
<feature type="binding site" evidence="1">
    <location>
        <position position="447"/>
    </location>
    <ligand>
        <name>(6S)-NADPHX</name>
        <dbReference type="ChEBI" id="CHEBI:64076"/>
        <label>2</label>
        <note>for dehydratase activity</note>
    </ligand>
</feature>
<gene>
    <name type="primary">nnr</name>
    <name type="ordered locus">glr2237</name>
</gene>
<proteinExistence type="inferred from homology"/>
<keyword id="KW-0067">ATP-binding</keyword>
<keyword id="KW-0413">Isomerase</keyword>
<keyword id="KW-0456">Lyase</keyword>
<keyword id="KW-0479">Metal-binding</keyword>
<keyword id="KW-0511">Multifunctional enzyme</keyword>
<keyword id="KW-0520">NAD</keyword>
<keyword id="KW-0521">NADP</keyword>
<keyword id="KW-0547">Nucleotide-binding</keyword>
<keyword id="KW-0630">Potassium</keyword>
<keyword id="KW-1185">Reference proteome</keyword>